<proteinExistence type="inferred from homology"/>
<dbReference type="EMBL" id="CP000776">
    <property type="protein sequence ID" value="ABS50992.1"/>
    <property type="molecule type" value="Genomic_DNA"/>
</dbReference>
<dbReference type="RefSeq" id="WP_012108095.1">
    <property type="nucleotide sequence ID" value="NC_009714.1"/>
</dbReference>
<dbReference type="SMR" id="A7HZX3"/>
<dbReference type="STRING" id="360107.CHAB381_0207"/>
<dbReference type="KEGG" id="cha:CHAB381_0207"/>
<dbReference type="eggNOG" id="COG0100">
    <property type="taxonomic scope" value="Bacteria"/>
</dbReference>
<dbReference type="HOGENOM" id="CLU_072439_5_0_7"/>
<dbReference type="OrthoDB" id="9806415at2"/>
<dbReference type="Proteomes" id="UP000002407">
    <property type="component" value="Chromosome"/>
</dbReference>
<dbReference type="GO" id="GO:1990904">
    <property type="term" value="C:ribonucleoprotein complex"/>
    <property type="evidence" value="ECO:0007669"/>
    <property type="project" value="UniProtKB-KW"/>
</dbReference>
<dbReference type="GO" id="GO:0005840">
    <property type="term" value="C:ribosome"/>
    <property type="evidence" value="ECO:0007669"/>
    <property type="project" value="UniProtKB-KW"/>
</dbReference>
<dbReference type="GO" id="GO:0019843">
    <property type="term" value="F:rRNA binding"/>
    <property type="evidence" value="ECO:0007669"/>
    <property type="project" value="UniProtKB-UniRule"/>
</dbReference>
<dbReference type="GO" id="GO:0003735">
    <property type="term" value="F:structural constituent of ribosome"/>
    <property type="evidence" value="ECO:0007669"/>
    <property type="project" value="InterPro"/>
</dbReference>
<dbReference type="GO" id="GO:0006412">
    <property type="term" value="P:translation"/>
    <property type="evidence" value="ECO:0007669"/>
    <property type="project" value="UniProtKB-UniRule"/>
</dbReference>
<dbReference type="FunFam" id="3.30.420.80:FF:000001">
    <property type="entry name" value="30S ribosomal protein S11"/>
    <property type="match status" value="1"/>
</dbReference>
<dbReference type="Gene3D" id="3.30.420.80">
    <property type="entry name" value="Ribosomal protein S11"/>
    <property type="match status" value="1"/>
</dbReference>
<dbReference type="HAMAP" id="MF_01310">
    <property type="entry name" value="Ribosomal_uS11"/>
    <property type="match status" value="1"/>
</dbReference>
<dbReference type="InterPro" id="IPR001971">
    <property type="entry name" value="Ribosomal_uS11"/>
</dbReference>
<dbReference type="InterPro" id="IPR019981">
    <property type="entry name" value="Ribosomal_uS11_bac-type"/>
</dbReference>
<dbReference type="InterPro" id="IPR036967">
    <property type="entry name" value="Ribosomal_uS11_sf"/>
</dbReference>
<dbReference type="NCBIfam" id="NF003698">
    <property type="entry name" value="PRK05309.1"/>
    <property type="match status" value="1"/>
</dbReference>
<dbReference type="NCBIfam" id="TIGR03632">
    <property type="entry name" value="uS11_bact"/>
    <property type="match status" value="1"/>
</dbReference>
<dbReference type="PANTHER" id="PTHR11759">
    <property type="entry name" value="40S RIBOSOMAL PROTEIN S14/30S RIBOSOMAL PROTEIN S11"/>
    <property type="match status" value="1"/>
</dbReference>
<dbReference type="Pfam" id="PF00411">
    <property type="entry name" value="Ribosomal_S11"/>
    <property type="match status" value="1"/>
</dbReference>
<dbReference type="PIRSF" id="PIRSF002131">
    <property type="entry name" value="Ribosomal_S11"/>
    <property type="match status" value="1"/>
</dbReference>
<dbReference type="SUPFAM" id="SSF53137">
    <property type="entry name" value="Translational machinery components"/>
    <property type="match status" value="1"/>
</dbReference>
<keyword id="KW-1185">Reference proteome</keyword>
<keyword id="KW-0687">Ribonucleoprotein</keyword>
<keyword id="KW-0689">Ribosomal protein</keyword>
<keyword id="KW-0694">RNA-binding</keyword>
<keyword id="KW-0699">rRNA-binding</keyword>
<name>RS11_CAMHC</name>
<sequence length="130" mass="13954">MAEKKILKKKVVKKSIAKGIVYISATFNNTMVTVTDEMGNAIAWSSAGALNFKGSKKSTPYAAQQAVEDALNKAKEHGIKEVGIKVQGPGSGRETAVKSIGAIEGIKVTFFKDITPLAHNGCRPPKRRRV</sequence>
<evidence type="ECO:0000255" key="1">
    <source>
        <dbReference type="HAMAP-Rule" id="MF_01310"/>
    </source>
</evidence>
<evidence type="ECO:0000305" key="2"/>
<comment type="function">
    <text evidence="1">Located on the platform of the 30S subunit, it bridges several disparate RNA helices of the 16S rRNA. Forms part of the Shine-Dalgarno cleft in the 70S ribosome.</text>
</comment>
<comment type="subunit">
    <text evidence="1">Part of the 30S ribosomal subunit. Interacts with proteins S7 and S18. Binds to IF-3.</text>
</comment>
<comment type="similarity">
    <text evidence="1">Belongs to the universal ribosomal protein uS11 family.</text>
</comment>
<gene>
    <name evidence="1" type="primary">rpsK</name>
    <name type="ordered locus">CHAB381_0207</name>
</gene>
<reference key="1">
    <citation type="submission" date="2007-07" db="EMBL/GenBank/DDBJ databases">
        <title>Complete genome sequence of Campylobacter hominis ATCC BAA-381, a commensal isolated from the human gastrointestinal tract.</title>
        <authorList>
            <person name="Fouts D.E."/>
            <person name="Mongodin E.F."/>
            <person name="Puiu D."/>
            <person name="Sebastian Y."/>
            <person name="Miller W.G."/>
            <person name="Mandrell R.E."/>
            <person name="Nelson K.E."/>
        </authorList>
    </citation>
    <scope>NUCLEOTIDE SEQUENCE [LARGE SCALE GENOMIC DNA]</scope>
    <source>
        <strain>ATCC BAA-381 / DSM 21671 / CCUG 45161 / LMG 19568 / NCTC 13146 / CH001A</strain>
    </source>
</reference>
<feature type="chain" id="PRO_1000051831" description="Small ribosomal subunit protein uS11">
    <location>
        <begin position="1"/>
        <end position="130"/>
    </location>
</feature>
<protein>
    <recommendedName>
        <fullName evidence="1">Small ribosomal subunit protein uS11</fullName>
    </recommendedName>
    <alternativeName>
        <fullName evidence="2">30S ribosomal protein S11</fullName>
    </alternativeName>
</protein>
<organism>
    <name type="scientific">Campylobacter hominis (strain ATCC BAA-381 / DSM 21671 / CCUG 45161 / LMG 19568 / NCTC 13146 / CH001A)</name>
    <dbReference type="NCBI Taxonomy" id="360107"/>
    <lineage>
        <taxon>Bacteria</taxon>
        <taxon>Pseudomonadati</taxon>
        <taxon>Campylobacterota</taxon>
        <taxon>Epsilonproteobacteria</taxon>
        <taxon>Campylobacterales</taxon>
        <taxon>Campylobacteraceae</taxon>
        <taxon>Campylobacter</taxon>
    </lineage>
</organism>
<accession>A7HZX3</accession>